<comment type="similarity">
    <text evidence="1">Belongs to the PPR family. PCMP-E subfamily.</text>
</comment>
<comment type="online information" name="Pentatricopeptide repeat proteins">
    <link uri="https://ppr.plantenergy.uwa.edu.au"/>
</comment>
<feature type="chain" id="PRO_0000356127" description="Putative pentatricopeptide repeat-containing protein At3g47840">
    <location>
        <begin position="1"/>
        <end position="706"/>
    </location>
</feature>
<feature type="repeat" description="PPR 1">
    <location>
        <begin position="39"/>
        <end position="69"/>
    </location>
</feature>
<feature type="repeat" description="PPR 2">
    <location>
        <begin position="70"/>
        <end position="104"/>
    </location>
</feature>
<feature type="repeat" description="PPR 3">
    <location>
        <begin position="107"/>
        <end position="141"/>
    </location>
</feature>
<feature type="repeat" description="PPR 4">
    <location>
        <begin position="142"/>
        <end position="172"/>
    </location>
</feature>
<feature type="repeat" description="PPR 5">
    <location>
        <begin position="173"/>
        <end position="203"/>
    </location>
</feature>
<feature type="repeat" description="PPR 6">
    <location>
        <begin position="208"/>
        <end position="242"/>
    </location>
</feature>
<feature type="repeat" description="PPR 7">
    <location>
        <begin position="243"/>
        <end position="273"/>
    </location>
</feature>
<feature type="repeat" description="PPR 8">
    <location>
        <begin position="274"/>
        <end position="308"/>
    </location>
</feature>
<feature type="repeat" description="PPR 9">
    <location>
        <begin position="309"/>
        <end position="343"/>
    </location>
</feature>
<feature type="repeat" description="PPR 10">
    <location>
        <begin position="344"/>
        <end position="374"/>
    </location>
</feature>
<feature type="repeat" description="PPR 11">
    <location>
        <begin position="375"/>
        <end position="409"/>
    </location>
</feature>
<feature type="repeat" description="PPR 12">
    <location>
        <begin position="410"/>
        <end position="444"/>
    </location>
</feature>
<feature type="repeat" description="PPR 13">
    <location>
        <begin position="445"/>
        <end position="475"/>
    </location>
</feature>
<feature type="repeat" description="PPR 14">
    <location>
        <begin position="476"/>
        <end position="510"/>
    </location>
</feature>
<feature type="repeat" description="PPR 15">
    <location>
        <begin position="511"/>
        <end position="541"/>
    </location>
</feature>
<feature type="repeat" description="PPR 16">
    <location>
        <begin position="547"/>
        <end position="577"/>
    </location>
</feature>
<feature type="region of interest" description="Type E motif">
    <location>
        <begin position="582"/>
        <end position="657"/>
    </location>
</feature>
<feature type="region of interest" description="Type E(+) motif">
    <location>
        <begin position="658"/>
        <end position="688"/>
    </location>
</feature>
<dbReference type="EMBL" id="AL049746">
    <property type="protein sequence ID" value="CAB41867.1"/>
    <property type="molecule type" value="Genomic_DNA"/>
</dbReference>
<dbReference type="EMBL" id="CP002686">
    <property type="protein sequence ID" value="AEE78339.1"/>
    <property type="molecule type" value="Genomic_DNA"/>
</dbReference>
<dbReference type="PIR" id="T07723">
    <property type="entry name" value="T07723"/>
</dbReference>
<dbReference type="RefSeq" id="NP_190368.1">
    <property type="nucleotide sequence ID" value="NM_114654.2"/>
</dbReference>
<dbReference type="SMR" id="Q9STS9"/>
<dbReference type="FunCoup" id="Q9STS9">
    <property type="interactions" value="116"/>
</dbReference>
<dbReference type="iPTMnet" id="Q9STS9"/>
<dbReference type="PaxDb" id="3702-AT3G47840.1"/>
<dbReference type="EnsemblPlants" id="AT3G47840.1">
    <property type="protein sequence ID" value="AT3G47840.1"/>
    <property type="gene ID" value="AT3G47840"/>
</dbReference>
<dbReference type="GeneID" id="823940"/>
<dbReference type="Gramene" id="AT3G47840.1">
    <property type="protein sequence ID" value="AT3G47840.1"/>
    <property type="gene ID" value="AT3G47840"/>
</dbReference>
<dbReference type="KEGG" id="ath:AT3G47840"/>
<dbReference type="Araport" id="AT3G47840"/>
<dbReference type="TAIR" id="AT3G47840"/>
<dbReference type="eggNOG" id="KOG4197">
    <property type="taxonomic scope" value="Eukaryota"/>
</dbReference>
<dbReference type="HOGENOM" id="CLU_002706_15_10_1"/>
<dbReference type="InParanoid" id="Q9STS9"/>
<dbReference type="OMA" id="HGDVDCG"/>
<dbReference type="PhylomeDB" id="Q9STS9"/>
<dbReference type="PRO" id="PR:Q9STS9"/>
<dbReference type="Proteomes" id="UP000006548">
    <property type="component" value="Chromosome 3"/>
</dbReference>
<dbReference type="ExpressionAtlas" id="Q9STS9">
    <property type="expression patterns" value="baseline and differential"/>
</dbReference>
<dbReference type="GO" id="GO:0003723">
    <property type="term" value="F:RNA binding"/>
    <property type="evidence" value="ECO:0007669"/>
    <property type="project" value="InterPro"/>
</dbReference>
<dbReference type="GO" id="GO:0009451">
    <property type="term" value="P:RNA modification"/>
    <property type="evidence" value="ECO:0007669"/>
    <property type="project" value="InterPro"/>
</dbReference>
<dbReference type="FunFam" id="1.25.40.10:FF:000525">
    <property type="entry name" value="Pentatricopeptide (PPR) repeat-containing protein-like"/>
    <property type="match status" value="1"/>
</dbReference>
<dbReference type="FunFam" id="1.25.40.10:FF:000355">
    <property type="entry name" value="Pentatricopeptide repeat-containing protein"/>
    <property type="match status" value="1"/>
</dbReference>
<dbReference type="FunFam" id="1.25.40.10:FF:000343">
    <property type="entry name" value="Pentatricopeptide repeat-containing protein At3g58590"/>
    <property type="match status" value="1"/>
</dbReference>
<dbReference type="FunFam" id="1.25.40.10:FF:000196">
    <property type="entry name" value="Pentatricopeptide repeat-containing protein At4g14850"/>
    <property type="match status" value="1"/>
</dbReference>
<dbReference type="Gene3D" id="1.25.40.10">
    <property type="entry name" value="Tetratricopeptide repeat domain"/>
    <property type="match status" value="5"/>
</dbReference>
<dbReference type="InterPro" id="IPR046848">
    <property type="entry name" value="E_motif"/>
</dbReference>
<dbReference type="InterPro" id="IPR002885">
    <property type="entry name" value="Pentatricopeptide_rpt"/>
</dbReference>
<dbReference type="InterPro" id="IPR046960">
    <property type="entry name" value="PPR_At4g14850-like_plant"/>
</dbReference>
<dbReference type="InterPro" id="IPR011990">
    <property type="entry name" value="TPR-like_helical_dom_sf"/>
</dbReference>
<dbReference type="NCBIfam" id="TIGR00756">
    <property type="entry name" value="PPR"/>
    <property type="match status" value="4"/>
</dbReference>
<dbReference type="PANTHER" id="PTHR24015:SF1799">
    <property type="entry name" value="OS05G0581300 PROTEIN"/>
    <property type="match status" value="1"/>
</dbReference>
<dbReference type="PANTHER" id="PTHR24015">
    <property type="entry name" value="OS07G0578800 PROTEIN-RELATED"/>
    <property type="match status" value="1"/>
</dbReference>
<dbReference type="Pfam" id="PF20431">
    <property type="entry name" value="E_motif"/>
    <property type="match status" value="1"/>
</dbReference>
<dbReference type="Pfam" id="PF01535">
    <property type="entry name" value="PPR"/>
    <property type="match status" value="3"/>
</dbReference>
<dbReference type="Pfam" id="PF12854">
    <property type="entry name" value="PPR_1"/>
    <property type="match status" value="1"/>
</dbReference>
<dbReference type="Pfam" id="PF13041">
    <property type="entry name" value="PPR_2"/>
    <property type="match status" value="4"/>
</dbReference>
<dbReference type="SUPFAM" id="SSF48452">
    <property type="entry name" value="TPR-like"/>
    <property type="match status" value="1"/>
</dbReference>
<dbReference type="PROSITE" id="PS51375">
    <property type="entry name" value="PPR"/>
    <property type="match status" value="17"/>
</dbReference>
<sequence length="706" mass="78054">MISSVRNCGTIQRFCTTSISLLQKPVEENIVRISNQVMVKFDPNSHLRSLINAGNLRAARQVFDKMPHGDIVSWTSIIKRYVTANNSDEALILFSAMRVVDHAVSPDTSVLSVVLKACGQSSNIAYGESLHAYAVKTSLLSSVYVGSSLLDMYKRVGKIDKSCRVFSEMPFRNAVTWTAIITGLVHAGRYKEGLTYFSEMSRSEELSDTYTFAIALKACAGLRQVKYGKAIHTHVIVRGFVTTLCVANSLATMYTECGEMQDGLCLFENMSERDVVSWTSLIVAYKRIGQEVKAVETFIKMRNSQVPPNEQTFASMFSACASLSRLVWGEQLHCNVLSLGLNDSLSVSNSMMKMYSTCGNLVSASVLFQGMRCRDIISWSTIIGGYCQAGFGEEGFKYFSWMRQSGTKPTDFALASLLSVSGNMAVIEGGRQVHALALCFGLEQNSTVRSSLINMYSKCGSIKEASMIFGETDRDDIVSLTAMINGYAEHGKSKEAIDLFEKSLKVGFRPDSVTFISVLTACTHSGQLDLGFHYFNMMQETYNMRPAKEHYGCMVDLLCRAGRLSDAEKMINEMSWKKDDVVWTTLLIACKAKGDIERGRRAAERILELDPTCATALVTLANIYSSTGNLEEAANVRKNMKAKGVIKEPGWSSIKIKDCVSAFVSGDRFHPQSEDIYNILELAVSGAEAHRFDCTLKRAFGVNLYS</sequence>
<reference key="1">
    <citation type="journal article" date="2000" name="Nature">
        <title>Sequence and analysis of chromosome 3 of the plant Arabidopsis thaliana.</title>
        <authorList>
            <person name="Salanoubat M."/>
            <person name="Lemcke K."/>
            <person name="Rieger M."/>
            <person name="Ansorge W."/>
            <person name="Unseld M."/>
            <person name="Fartmann B."/>
            <person name="Valle G."/>
            <person name="Bloecker H."/>
            <person name="Perez-Alonso M."/>
            <person name="Obermaier B."/>
            <person name="Delseny M."/>
            <person name="Boutry M."/>
            <person name="Grivell L.A."/>
            <person name="Mache R."/>
            <person name="Puigdomenech P."/>
            <person name="De Simone V."/>
            <person name="Choisne N."/>
            <person name="Artiguenave F."/>
            <person name="Robert C."/>
            <person name="Brottier P."/>
            <person name="Wincker P."/>
            <person name="Cattolico L."/>
            <person name="Weissenbach J."/>
            <person name="Saurin W."/>
            <person name="Quetier F."/>
            <person name="Schaefer M."/>
            <person name="Mueller-Auer S."/>
            <person name="Gabel C."/>
            <person name="Fuchs M."/>
            <person name="Benes V."/>
            <person name="Wurmbach E."/>
            <person name="Drzonek H."/>
            <person name="Erfle H."/>
            <person name="Jordan N."/>
            <person name="Bangert S."/>
            <person name="Wiedelmann R."/>
            <person name="Kranz H."/>
            <person name="Voss H."/>
            <person name="Holland R."/>
            <person name="Brandt P."/>
            <person name="Nyakatura G."/>
            <person name="Vezzi A."/>
            <person name="D'Angelo M."/>
            <person name="Pallavicini A."/>
            <person name="Toppo S."/>
            <person name="Simionati B."/>
            <person name="Conrad A."/>
            <person name="Hornischer K."/>
            <person name="Kauer G."/>
            <person name="Loehnert T.-H."/>
            <person name="Nordsiek G."/>
            <person name="Reichelt J."/>
            <person name="Scharfe M."/>
            <person name="Schoen O."/>
            <person name="Bargues M."/>
            <person name="Terol J."/>
            <person name="Climent J."/>
            <person name="Navarro P."/>
            <person name="Collado C."/>
            <person name="Perez-Perez A."/>
            <person name="Ottenwaelder B."/>
            <person name="Duchemin D."/>
            <person name="Cooke R."/>
            <person name="Laudie M."/>
            <person name="Berger-Llauro C."/>
            <person name="Purnelle B."/>
            <person name="Masuy D."/>
            <person name="de Haan M."/>
            <person name="Maarse A.C."/>
            <person name="Alcaraz J.-P."/>
            <person name="Cottet A."/>
            <person name="Casacuberta E."/>
            <person name="Monfort A."/>
            <person name="Argiriou A."/>
            <person name="Flores M."/>
            <person name="Liguori R."/>
            <person name="Vitale D."/>
            <person name="Mannhaupt G."/>
            <person name="Haase D."/>
            <person name="Schoof H."/>
            <person name="Rudd S."/>
            <person name="Zaccaria P."/>
            <person name="Mewes H.-W."/>
            <person name="Mayer K.F.X."/>
            <person name="Kaul S."/>
            <person name="Town C.D."/>
            <person name="Koo H.L."/>
            <person name="Tallon L.J."/>
            <person name="Jenkins J."/>
            <person name="Rooney T."/>
            <person name="Rizzo M."/>
            <person name="Walts A."/>
            <person name="Utterback T."/>
            <person name="Fujii C.Y."/>
            <person name="Shea T.P."/>
            <person name="Creasy T.H."/>
            <person name="Haas B."/>
            <person name="Maiti R."/>
            <person name="Wu D."/>
            <person name="Peterson J."/>
            <person name="Van Aken S."/>
            <person name="Pai G."/>
            <person name="Militscher J."/>
            <person name="Sellers P."/>
            <person name="Gill J.E."/>
            <person name="Feldblyum T.V."/>
            <person name="Preuss D."/>
            <person name="Lin X."/>
            <person name="Nierman W.C."/>
            <person name="Salzberg S.L."/>
            <person name="White O."/>
            <person name="Venter J.C."/>
            <person name="Fraser C.M."/>
            <person name="Kaneko T."/>
            <person name="Nakamura Y."/>
            <person name="Sato S."/>
            <person name="Kato T."/>
            <person name="Asamizu E."/>
            <person name="Sasamoto S."/>
            <person name="Kimura T."/>
            <person name="Idesawa K."/>
            <person name="Kawashima K."/>
            <person name="Kishida Y."/>
            <person name="Kiyokawa C."/>
            <person name="Kohara M."/>
            <person name="Matsumoto M."/>
            <person name="Matsuno A."/>
            <person name="Muraki A."/>
            <person name="Nakayama S."/>
            <person name="Nakazaki N."/>
            <person name="Shinpo S."/>
            <person name="Takeuchi C."/>
            <person name="Wada T."/>
            <person name="Watanabe A."/>
            <person name="Yamada M."/>
            <person name="Yasuda M."/>
            <person name="Tabata S."/>
        </authorList>
    </citation>
    <scope>NUCLEOTIDE SEQUENCE [LARGE SCALE GENOMIC DNA]</scope>
    <source>
        <strain>cv. Columbia</strain>
    </source>
</reference>
<reference key="2">
    <citation type="journal article" date="2017" name="Plant J.">
        <title>Araport11: a complete reannotation of the Arabidopsis thaliana reference genome.</title>
        <authorList>
            <person name="Cheng C.Y."/>
            <person name="Krishnakumar V."/>
            <person name="Chan A.P."/>
            <person name="Thibaud-Nissen F."/>
            <person name="Schobel S."/>
            <person name="Town C.D."/>
        </authorList>
    </citation>
    <scope>GENOME REANNOTATION</scope>
    <source>
        <strain>cv. Columbia</strain>
    </source>
</reference>
<reference key="3">
    <citation type="journal article" date="2000" name="Plant Mol. Biol.">
        <title>In Arabidopsis thaliana, 1% of the genome codes for a novel protein family unique to plants.</title>
        <authorList>
            <person name="Aubourg S."/>
            <person name="Boudet N."/>
            <person name="Kreis M."/>
            <person name="Lecharny A."/>
        </authorList>
    </citation>
    <scope>GENE FAMILY</scope>
</reference>
<reference key="4">
    <citation type="journal article" date="2004" name="Plant Cell">
        <title>Genome-wide analysis of Arabidopsis pentatricopeptide repeat proteins reveals their essential role in organelle biogenesis.</title>
        <authorList>
            <person name="Lurin C."/>
            <person name="Andres C."/>
            <person name="Aubourg S."/>
            <person name="Bellaoui M."/>
            <person name="Bitton F."/>
            <person name="Bruyere C."/>
            <person name="Caboche M."/>
            <person name="Debast C."/>
            <person name="Gualberto J."/>
            <person name="Hoffmann B."/>
            <person name="Lecharny A."/>
            <person name="Le Ret M."/>
            <person name="Martin-Magniette M.-L."/>
            <person name="Mireau H."/>
            <person name="Peeters N."/>
            <person name="Renou J.-P."/>
            <person name="Szurek B."/>
            <person name="Taconnat L."/>
            <person name="Small I."/>
        </authorList>
    </citation>
    <scope>GENE FAMILY</scope>
</reference>
<gene>
    <name type="primary">PCMP-E43</name>
    <name type="ordered locus">At3g47840</name>
    <name type="ORF">T23J7.170</name>
</gene>
<evidence type="ECO:0000305" key="1"/>
<keyword id="KW-1185">Reference proteome</keyword>
<keyword id="KW-0677">Repeat</keyword>
<organism>
    <name type="scientific">Arabidopsis thaliana</name>
    <name type="common">Mouse-ear cress</name>
    <dbReference type="NCBI Taxonomy" id="3702"/>
    <lineage>
        <taxon>Eukaryota</taxon>
        <taxon>Viridiplantae</taxon>
        <taxon>Streptophyta</taxon>
        <taxon>Embryophyta</taxon>
        <taxon>Tracheophyta</taxon>
        <taxon>Spermatophyta</taxon>
        <taxon>Magnoliopsida</taxon>
        <taxon>eudicotyledons</taxon>
        <taxon>Gunneridae</taxon>
        <taxon>Pentapetalae</taxon>
        <taxon>rosids</taxon>
        <taxon>malvids</taxon>
        <taxon>Brassicales</taxon>
        <taxon>Brassicaceae</taxon>
        <taxon>Camelineae</taxon>
        <taxon>Arabidopsis</taxon>
    </lineage>
</organism>
<protein>
    <recommendedName>
        <fullName>Putative pentatricopeptide repeat-containing protein At3g47840</fullName>
    </recommendedName>
</protein>
<accession>Q9STS9</accession>
<name>PP268_ARATH</name>
<proteinExistence type="inferred from homology"/>